<gene>
    <name evidence="1" type="primary">fmt</name>
    <name type="ordered locus">SpyM3_1372</name>
</gene>
<sequence length="311" mass="33735">MIKLLFMGTPQFSATVLKGLLDNPAYEILGVVTQPDRAVGRKKDIKVTPVKQLALEHGISIYQPEKLSGSQELIEIMGLGADGIITAAFGQFLPTILLDSVSFAINVHASLLPKYRGGAPIHYAIMNGDKEAGVTIMEMIKEMDAGDMVAKASTPILETDNVGTLFEKLAIIGRDLLLDSLPAYLSGELKPIPQDHSQATFSPNISPEQEKLDWTMFNQEVFNHIRGMNPWPVAHTFLEGQRLKIYEAQLAEGEGLPGQVIVKTKKSLVIATGQGALSLIVVQPAGKPKMSIIDFLNGIGRKLEVGDIIGR</sequence>
<organism>
    <name type="scientific">Streptococcus pyogenes serotype M3 (strain ATCC BAA-595 / MGAS315)</name>
    <dbReference type="NCBI Taxonomy" id="198466"/>
    <lineage>
        <taxon>Bacteria</taxon>
        <taxon>Bacillati</taxon>
        <taxon>Bacillota</taxon>
        <taxon>Bacilli</taxon>
        <taxon>Lactobacillales</taxon>
        <taxon>Streptococcaceae</taxon>
        <taxon>Streptococcus</taxon>
    </lineage>
</organism>
<name>FMT_STRP3</name>
<keyword id="KW-0648">Protein biosynthesis</keyword>
<keyword id="KW-0808">Transferase</keyword>
<comment type="function">
    <text evidence="1">Attaches a formyl group to the free amino group of methionyl-tRNA(fMet). The formyl group appears to play a dual role in the initiator identity of N-formylmethionyl-tRNA by promoting its recognition by IF2 and preventing the misappropriation of this tRNA by the elongation apparatus.</text>
</comment>
<comment type="catalytic activity">
    <reaction evidence="1">
        <text>L-methionyl-tRNA(fMet) + (6R)-10-formyltetrahydrofolate = N-formyl-L-methionyl-tRNA(fMet) + (6S)-5,6,7,8-tetrahydrofolate + H(+)</text>
        <dbReference type="Rhea" id="RHEA:24380"/>
        <dbReference type="Rhea" id="RHEA-COMP:9952"/>
        <dbReference type="Rhea" id="RHEA-COMP:9953"/>
        <dbReference type="ChEBI" id="CHEBI:15378"/>
        <dbReference type="ChEBI" id="CHEBI:57453"/>
        <dbReference type="ChEBI" id="CHEBI:78530"/>
        <dbReference type="ChEBI" id="CHEBI:78844"/>
        <dbReference type="ChEBI" id="CHEBI:195366"/>
        <dbReference type="EC" id="2.1.2.9"/>
    </reaction>
</comment>
<comment type="similarity">
    <text evidence="1">Belongs to the Fmt family.</text>
</comment>
<reference key="1">
    <citation type="journal article" date="2002" name="Proc. Natl. Acad. Sci. U.S.A.">
        <title>Genome sequence of a serotype M3 strain of group A Streptococcus: phage-encoded toxins, the high-virulence phenotype, and clone emergence.</title>
        <authorList>
            <person name="Beres S.B."/>
            <person name="Sylva G.L."/>
            <person name="Barbian K.D."/>
            <person name="Lei B."/>
            <person name="Hoff J.S."/>
            <person name="Mammarella N.D."/>
            <person name="Liu M.-Y."/>
            <person name="Smoot J.C."/>
            <person name="Porcella S.F."/>
            <person name="Parkins L.D."/>
            <person name="Campbell D.S."/>
            <person name="Smith T.M."/>
            <person name="McCormick J.K."/>
            <person name="Leung D.Y.M."/>
            <person name="Schlievert P.M."/>
            <person name="Musser J.M."/>
        </authorList>
    </citation>
    <scope>NUCLEOTIDE SEQUENCE [LARGE SCALE GENOMIC DNA]</scope>
    <source>
        <strain>ATCC BAA-595 / MGAS315</strain>
    </source>
</reference>
<proteinExistence type="inferred from homology"/>
<evidence type="ECO:0000255" key="1">
    <source>
        <dbReference type="HAMAP-Rule" id="MF_00182"/>
    </source>
</evidence>
<accession>P0DB04</accession>
<accession>Q8K6E8</accession>
<feature type="chain" id="PRO_0000083061" description="Methionyl-tRNA formyltransferase">
    <location>
        <begin position="1"/>
        <end position="311"/>
    </location>
</feature>
<feature type="binding site" evidence="1">
    <location>
        <begin position="110"/>
        <end position="113"/>
    </location>
    <ligand>
        <name>(6S)-5,6,7,8-tetrahydrofolate</name>
        <dbReference type="ChEBI" id="CHEBI:57453"/>
    </ligand>
</feature>
<dbReference type="EC" id="2.1.2.9" evidence="1"/>
<dbReference type="EMBL" id="AE014074">
    <property type="protein sequence ID" value="AAM79979.1"/>
    <property type="molecule type" value="Genomic_DNA"/>
</dbReference>
<dbReference type="RefSeq" id="WP_011054834.1">
    <property type="nucleotide sequence ID" value="NC_004070.1"/>
</dbReference>
<dbReference type="SMR" id="P0DB04"/>
<dbReference type="KEGG" id="spg:SpyM3_1372"/>
<dbReference type="HOGENOM" id="CLU_033347_1_1_9"/>
<dbReference type="Proteomes" id="UP000000564">
    <property type="component" value="Chromosome"/>
</dbReference>
<dbReference type="GO" id="GO:0005829">
    <property type="term" value="C:cytosol"/>
    <property type="evidence" value="ECO:0007669"/>
    <property type="project" value="TreeGrafter"/>
</dbReference>
<dbReference type="GO" id="GO:0004479">
    <property type="term" value="F:methionyl-tRNA formyltransferase activity"/>
    <property type="evidence" value="ECO:0007669"/>
    <property type="project" value="UniProtKB-UniRule"/>
</dbReference>
<dbReference type="CDD" id="cd08646">
    <property type="entry name" value="FMT_core_Met-tRNA-FMT_N"/>
    <property type="match status" value="1"/>
</dbReference>
<dbReference type="CDD" id="cd08704">
    <property type="entry name" value="Met_tRNA_FMT_C"/>
    <property type="match status" value="1"/>
</dbReference>
<dbReference type="FunFam" id="3.40.50.170:FF:000004">
    <property type="entry name" value="Methionyl-tRNA formyltransferase"/>
    <property type="match status" value="1"/>
</dbReference>
<dbReference type="Gene3D" id="3.10.25.10">
    <property type="entry name" value="Formyl transferase, C-terminal domain"/>
    <property type="match status" value="1"/>
</dbReference>
<dbReference type="Gene3D" id="3.40.50.170">
    <property type="entry name" value="Formyl transferase, N-terminal domain"/>
    <property type="match status" value="1"/>
</dbReference>
<dbReference type="HAMAP" id="MF_00182">
    <property type="entry name" value="Formyl_trans"/>
    <property type="match status" value="1"/>
</dbReference>
<dbReference type="InterPro" id="IPR005794">
    <property type="entry name" value="Fmt"/>
</dbReference>
<dbReference type="InterPro" id="IPR005793">
    <property type="entry name" value="Formyl_trans_C"/>
</dbReference>
<dbReference type="InterPro" id="IPR037022">
    <property type="entry name" value="Formyl_trans_C_sf"/>
</dbReference>
<dbReference type="InterPro" id="IPR002376">
    <property type="entry name" value="Formyl_transf_N"/>
</dbReference>
<dbReference type="InterPro" id="IPR036477">
    <property type="entry name" value="Formyl_transf_N_sf"/>
</dbReference>
<dbReference type="InterPro" id="IPR011034">
    <property type="entry name" value="Formyl_transferase-like_C_sf"/>
</dbReference>
<dbReference type="InterPro" id="IPR001555">
    <property type="entry name" value="GART_AS"/>
</dbReference>
<dbReference type="InterPro" id="IPR044135">
    <property type="entry name" value="Met-tRNA-FMT_C"/>
</dbReference>
<dbReference type="InterPro" id="IPR041711">
    <property type="entry name" value="Met-tRNA-FMT_N"/>
</dbReference>
<dbReference type="NCBIfam" id="TIGR00460">
    <property type="entry name" value="fmt"/>
    <property type="match status" value="1"/>
</dbReference>
<dbReference type="PANTHER" id="PTHR11138">
    <property type="entry name" value="METHIONYL-TRNA FORMYLTRANSFERASE"/>
    <property type="match status" value="1"/>
</dbReference>
<dbReference type="PANTHER" id="PTHR11138:SF5">
    <property type="entry name" value="METHIONYL-TRNA FORMYLTRANSFERASE, MITOCHONDRIAL"/>
    <property type="match status" value="1"/>
</dbReference>
<dbReference type="Pfam" id="PF02911">
    <property type="entry name" value="Formyl_trans_C"/>
    <property type="match status" value="1"/>
</dbReference>
<dbReference type="Pfam" id="PF00551">
    <property type="entry name" value="Formyl_trans_N"/>
    <property type="match status" value="1"/>
</dbReference>
<dbReference type="SUPFAM" id="SSF50486">
    <property type="entry name" value="FMT C-terminal domain-like"/>
    <property type="match status" value="1"/>
</dbReference>
<dbReference type="SUPFAM" id="SSF53328">
    <property type="entry name" value="Formyltransferase"/>
    <property type="match status" value="1"/>
</dbReference>
<dbReference type="PROSITE" id="PS00373">
    <property type="entry name" value="GART"/>
    <property type="match status" value="1"/>
</dbReference>
<protein>
    <recommendedName>
        <fullName evidence="1">Methionyl-tRNA formyltransferase</fullName>
        <ecNumber evidence="1">2.1.2.9</ecNumber>
    </recommendedName>
</protein>